<organism>
    <name type="scientific">Hyaloscypha variabilis (strain UAMH 11265 / GT02V1 / F)</name>
    <name type="common">Meliniomyces variabilis</name>
    <dbReference type="NCBI Taxonomy" id="1149755"/>
    <lineage>
        <taxon>Eukaryota</taxon>
        <taxon>Fungi</taxon>
        <taxon>Dikarya</taxon>
        <taxon>Ascomycota</taxon>
        <taxon>Pezizomycotina</taxon>
        <taxon>Leotiomycetes</taxon>
        <taxon>Helotiales</taxon>
        <taxon>Hyaloscyphaceae</taxon>
        <taxon>Hyaloscypha</taxon>
        <taxon>Hyaloscypha variabilis</taxon>
    </lineage>
</organism>
<keyword id="KW-0378">Hydrolase</keyword>
<keyword id="KW-1185">Reference proteome</keyword>
<keyword id="KW-0677">Repeat</keyword>
<keyword id="KW-0802">TPR repeat</keyword>
<gene>
    <name evidence="5" type="ORF">L207DRAFT_509616</name>
</gene>
<evidence type="ECO:0000255" key="1"/>
<evidence type="ECO:0000256" key="2">
    <source>
        <dbReference type="SAM" id="MobiDB-lite"/>
    </source>
</evidence>
<evidence type="ECO:0000269" key="3">
    <source>
    </source>
</evidence>
<evidence type="ECO:0000303" key="4">
    <source>
    </source>
</evidence>
<evidence type="ECO:0000312" key="5">
    <source>
        <dbReference type="EMBL" id="PMD43055.1"/>
    </source>
</evidence>
<feature type="chain" id="PRO_0000459342" description="Nucleotide-binding leucine-rich repeat (NLR)-like protein">
    <location>
        <begin position="1"/>
        <end position="990"/>
    </location>
</feature>
<feature type="domain" description="NB-ARC" evidence="1">
    <location>
        <begin position="334"/>
        <end position="563"/>
    </location>
</feature>
<feature type="repeat" description="TPR 1" evidence="1">
    <location>
        <begin position="732"/>
        <end position="765"/>
    </location>
</feature>
<feature type="repeat" description="TPR 2" evidence="1">
    <location>
        <begin position="774"/>
        <end position="807"/>
    </location>
</feature>
<feature type="repeat" description="TPR 3" evidence="1">
    <location>
        <begin position="816"/>
        <end position="849"/>
    </location>
</feature>
<feature type="repeat" description="TPR 4" evidence="1">
    <location>
        <begin position="858"/>
        <end position="891"/>
    </location>
</feature>
<feature type="repeat" description="TPR 5" evidence="1">
    <location>
        <begin position="900"/>
        <end position="933"/>
    </location>
</feature>
<feature type="repeat" description="TPR 6" evidence="1">
    <location>
        <begin position="942"/>
        <end position="975"/>
    </location>
</feature>
<feature type="region of interest" description="Purine nucleoside phosphorylase domain" evidence="3">
    <location>
        <begin position="22"/>
        <end position="304"/>
    </location>
</feature>
<feature type="region of interest" description="Disordered" evidence="2">
    <location>
        <begin position="965"/>
        <end position="990"/>
    </location>
</feature>
<feature type="compositionally biased region" description="Basic residues" evidence="2">
    <location>
        <begin position="981"/>
        <end position="990"/>
    </location>
</feature>
<name>NLRN_HYAVF</name>
<sequence>MSNTQDSAVRRPSLAPEEYSVGWICAIPTELTAAMAMLDTLHGPLESQPKDDGNNYTLGSIGGHNVVIACLPRYGTNDAAVAGISMQRTFSNLRFGLMVGIGGGIPSADNDIRLGDIAVSLPSAQAGGVIQHDMGKKEDGGFRRTGFLNGPPTLLLTAIAKLRATRTLGKEIAEIVNEAFAEEDDEEWRFPEKEDDILFEDGNELDGNGAEGEHVVQRKERKSKNPTCFYGNISSGNSVIKSAKERRRLAEEEGVICVEMEAAGLMNFFNCMVIRGICDYADAHKHKKWQQYAAAVAAAYAKILLCIISPQALKPHRIVHFSVPFGQNSKFIGREEHLRQVLTALTPEEFERDCQRVAITGLGGVGKTRIALEAAFRIRDKHPDCSVFWISAVNVSSFDAGFLEICRQFKVPGINEDKADVKSLAKAYLSQETAGRWLLIIDSADDLDMLYKSVKESDGNGSSRSLAEYLPFSRKGSILFTTRNHKAATYQAGSNVVTVEEMIESDSLQLLETSLIEKGKGFIEDDAKKLVRHLTNLPLAIKQAAAFINQNKITISNYLEVYESSALSDQALIELLSIDFEDQGRYRSDQNPIISTWLISFLDIQKSNPLAARYLYIMSCVAQRGIPRCLLPPASKFDEIQAIGTLTAYAFITELEDQNSFDIHRLVQLAARNWLKTRGELFQRSGDALKQVSRIFPFFKHENRNICIAYLPHAQHVLTFQDFPEDSQESLRDLLHNIGEYYYRTGKYREAEEFYWRALELKKLALGEHHPDTIGSMNNLAVVYERHGEYAKAESLQRQTLELMKQVFGEGHPDTLGSMNNLALVYEQQGEYAEAEKLQQQTLELRKQALGEDHPSTLMSMNNLATIYEQQGEYAKAESLQRQTLELKQQTLGEDHPSTLASMNNLALVYEHQGEYAKAETLYQQTLKLRKQVLGESHPDTLQSMNNLAIVYRLQGKYIEAEGLQQQQQSQATLDEGRLSKPARKRRKKK</sequence>
<reference evidence="5" key="1">
    <citation type="submission" date="2016-04" db="EMBL/GenBank/DDBJ databases">
        <title>A degradative enzymes factory behind the ericoid mycorrhizal symbiosis.</title>
        <authorList>
            <consortium name="DOE Joint Genome Institute"/>
            <person name="Martino E."/>
            <person name="Morin E."/>
            <person name="Grelet G."/>
            <person name="Kuo A."/>
            <person name="Kohler A."/>
            <person name="Daghino S."/>
            <person name="Barry K."/>
            <person name="Choi C."/>
            <person name="Cichocki N."/>
            <person name="Clum A."/>
            <person name="Copeland A."/>
            <person name="Hainaut M."/>
            <person name="Haridas S."/>
            <person name="Labutti K."/>
            <person name="Lindquist E."/>
            <person name="Lipzen A."/>
            <person name="Khouja H.-R."/>
            <person name="Murat C."/>
            <person name="Ohm R."/>
            <person name="Olson A."/>
            <person name="Spatafora J."/>
            <person name="Veneault-Fourrey C."/>
            <person name="Henrissat B."/>
            <person name="Grigoriev I."/>
            <person name="Martin F."/>
            <person name="Perotto S."/>
        </authorList>
    </citation>
    <scope>NUCLEOTIDE SEQUENCE [LARGE SCALE GENOMIC DNA]</scope>
    <source>
        <strain>UAMH 11265 / GT02V1 / F</strain>
    </source>
</reference>
<reference key="2">
    <citation type="journal article" date="2023" name="Cell">
        <title>A conserved family of immune effectors cleaves cellular ATP upon viral infection.</title>
        <authorList>
            <person name="Rousset F."/>
            <person name="Yirmiya E."/>
            <person name="Nesher S."/>
            <person name="Brandis A."/>
            <person name="Mehlman T."/>
            <person name="Itkin M."/>
            <person name="Malitsky S."/>
            <person name="Millman A."/>
            <person name="Melamed S."/>
            <person name="Sorek R."/>
        </authorList>
    </citation>
    <scope>FUNCTION</scope>
    <scope>CATALYTIC ACTIVITY</scope>
    <scope>DOMAIN</scope>
</reference>
<dbReference type="EC" id="3.5.99.-" evidence="3"/>
<dbReference type="EMBL" id="KZ613942">
    <property type="protein sequence ID" value="PMD43055.1"/>
    <property type="molecule type" value="Genomic_DNA"/>
</dbReference>
<dbReference type="SMR" id="A0A2J6RX17"/>
<dbReference type="STRING" id="1149755.A0A2J6RX17"/>
<dbReference type="OrthoDB" id="5986190at2759"/>
<dbReference type="Proteomes" id="UP000235786">
    <property type="component" value="Unassembled WGS sequence"/>
</dbReference>
<dbReference type="GO" id="GO:0043531">
    <property type="term" value="F:ADP binding"/>
    <property type="evidence" value="ECO:0007669"/>
    <property type="project" value="InterPro"/>
</dbReference>
<dbReference type="GO" id="GO:0016787">
    <property type="term" value="F:hydrolase activity"/>
    <property type="evidence" value="ECO:0007669"/>
    <property type="project" value="UniProtKB-KW"/>
</dbReference>
<dbReference type="GO" id="GO:0009116">
    <property type="term" value="P:nucleoside metabolic process"/>
    <property type="evidence" value="ECO:0007669"/>
    <property type="project" value="InterPro"/>
</dbReference>
<dbReference type="Gene3D" id="3.40.50.1580">
    <property type="entry name" value="Nucleoside phosphorylase domain"/>
    <property type="match status" value="1"/>
</dbReference>
<dbReference type="Gene3D" id="3.40.50.300">
    <property type="entry name" value="P-loop containing nucleotide triphosphate hydrolases"/>
    <property type="match status" value="1"/>
</dbReference>
<dbReference type="Gene3D" id="1.25.40.10">
    <property type="entry name" value="Tetratricopeptide repeat domain"/>
    <property type="match status" value="2"/>
</dbReference>
<dbReference type="InterPro" id="IPR002182">
    <property type="entry name" value="NB-ARC"/>
</dbReference>
<dbReference type="InterPro" id="IPR053137">
    <property type="entry name" value="NLR-like"/>
</dbReference>
<dbReference type="InterPro" id="IPR035994">
    <property type="entry name" value="Nucleoside_phosphorylase_sf"/>
</dbReference>
<dbReference type="InterPro" id="IPR027417">
    <property type="entry name" value="P-loop_NTPase"/>
</dbReference>
<dbReference type="InterPro" id="IPR011990">
    <property type="entry name" value="TPR-like_helical_dom_sf"/>
</dbReference>
<dbReference type="InterPro" id="IPR019734">
    <property type="entry name" value="TPR_rpt"/>
</dbReference>
<dbReference type="PANTHER" id="PTHR46082:SF11">
    <property type="entry name" value="AAA+ ATPASE DOMAIN-CONTAINING PROTEIN-RELATED"/>
    <property type="match status" value="1"/>
</dbReference>
<dbReference type="PANTHER" id="PTHR46082">
    <property type="entry name" value="ATP/GTP-BINDING PROTEIN-RELATED"/>
    <property type="match status" value="1"/>
</dbReference>
<dbReference type="Pfam" id="PF00931">
    <property type="entry name" value="NB-ARC"/>
    <property type="match status" value="1"/>
</dbReference>
<dbReference type="Pfam" id="PF13424">
    <property type="entry name" value="TPR_12"/>
    <property type="match status" value="3"/>
</dbReference>
<dbReference type="PRINTS" id="PR00381">
    <property type="entry name" value="KINESINLIGHT"/>
</dbReference>
<dbReference type="SMART" id="SM00028">
    <property type="entry name" value="TPR"/>
    <property type="match status" value="5"/>
</dbReference>
<dbReference type="SUPFAM" id="SSF52540">
    <property type="entry name" value="P-loop containing nucleoside triphosphate hydrolases"/>
    <property type="match status" value="1"/>
</dbReference>
<dbReference type="SUPFAM" id="SSF53167">
    <property type="entry name" value="Purine and uridine phosphorylases"/>
    <property type="match status" value="1"/>
</dbReference>
<dbReference type="SUPFAM" id="SSF48452">
    <property type="entry name" value="TPR-like"/>
    <property type="match status" value="2"/>
</dbReference>
<dbReference type="PROSITE" id="PS50005">
    <property type="entry name" value="TPR"/>
    <property type="match status" value="5"/>
</dbReference>
<proteinExistence type="evidence at protein level"/>
<accession>A0A2J6RX17</accession>
<comment type="function">
    <text evidence="3">The N-terminal purine nucleoside phosphorylase (PNP) domain cleaves the N-glycosidic bond of ATP, and to a lesser extent dATP; has very weak activity on adenosine and deoxyadenosine and no activity on (d)ADP or (d)AMP (PubMed:37595565).</text>
</comment>
<comment type="catalytic activity">
    <reaction evidence="3">
        <text>ATP + H2O = D-ribose 5-triphosphate + adenine</text>
        <dbReference type="Rhea" id="RHEA:44164"/>
        <dbReference type="ChEBI" id="CHEBI:15377"/>
        <dbReference type="ChEBI" id="CHEBI:16708"/>
        <dbReference type="ChEBI" id="CHEBI:30616"/>
        <dbReference type="ChEBI" id="CHEBI:91013"/>
    </reaction>
    <physiologicalReaction direction="left-to-right" evidence="3">
        <dbReference type="Rhea" id="RHEA:44165"/>
    </physiologicalReaction>
</comment>
<comment type="catalytic activity">
    <reaction evidence="3">
        <text>dATP + H2O = 2-deoxyribose 5-triphosphate + adenine</text>
        <dbReference type="Rhea" id="RHEA:77215"/>
        <dbReference type="ChEBI" id="CHEBI:15377"/>
        <dbReference type="ChEBI" id="CHEBI:16708"/>
        <dbReference type="ChEBI" id="CHEBI:61404"/>
        <dbReference type="ChEBI" id="CHEBI:72943"/>
    </reaction>
    <physiologicalReaction direction="left-to-right" evidence="3">
        <dbReference type="Rhea" id="RHEA:77216"/>
    </physiologicalReaction>
</comment>
<comment type="domain">
    <text evidence="3">Has an N-terminal purine nucleoside phosphorylase (PNP) domain, a central NB-ARC domain and several C-terminal TRP repeats. Expression of the PNP domain (residues 2-308) in E.coli slows growth considerably; the PNP domain has ATP nucleosidase activity (PubMed:37595565).</text>
</comment>
<protein>
    <recommendedName>
        <fullName evidence="4">Nucleotide-binding leucine-rich repeat (NLR)-like protein</fullName>
        <ecNumber evidence="3">3.5.99.-</ecNumber>
    </recommendedName>
</protein>